<proteinExistence type="evidence at protein level"/>
<organism>
    <name type="scientific">Litoria rothii</name>
    <name type="common">Roth's tree frog</name>
    <name type="synonym">Hyla rothii</name>
    <dbReference type="NCBI Taxonomy" id="336074"/>
    <lineage>
        <taxon>Eukaryota</taxon>
        <taxon>Metazoa</taxon>
        <taxon>Chordata</taxon>
        <taxon>Craniata</taxon>
        <taxon>Vertebrata</taxon>
        <taxon>Euteleostomi</taxon>
        <taxon>Amphibia</taxon>
        <taxon>Batrachia</taxon>
        <taxon>Anura</taxon>
        <taxon>Neobatrachia</taxon>
        <taxon>Hyloidea</taxon>
        <taxon>Hylidae</taxon>
        <taxon>Pelodryadinae</taxon>
        <taxon>Litoria</taxon>
    </lineage>
</organism>
<dbReference type="SMR" id="P86501"/>
<dbReference type="GO" id="GO:0005576">
    <property type="term" value="C:extracellular region"/>
    <property type="evidence" value="ECO:0000314"/>
    <property type="project" value="UniProtKB"/>
</dbReference>
<dbReference type="GO" id="GO:0050829">
    <property type="term" value="P:defense response to Gram-negative bacterium"/>
    <property type="evidence" value="ECO:0000314"/>
    <property type="project" value="UniProtKB"/>
</dbReference>
<dbReference type="GO" id="GO:0050830">
    <property type="term" value="P:defense response to Gram-positive bacterium"/>
    <property type="evidence" value="ECO:0000314"/>
    <property type="project" value="UniProtKB"/>
</dbReference>
<dbReference type="InterPro" id="IPR010000">
    <property type="entry name" value="Caerin_1"/>
</dbReference>
<dbReference type="Pfam" id="PF07440">
    <property type="entry name" value="Caerin_1"/>
    <property type="match status" value="1"/>
</dbReference>
<reference evidence="5" key="1">
    <citation type="journal article" date="2005" name="Rapid Commun. Mass Spectrom.">
        <title>The rothein peptides from the skin secretion of Roth's tree frog Litoria rothii. Sequence determination using positive and negative ion electrospray mass spectrometry.</title>
        <authorList>
            <person name="Brinkworth C.S."/>
            <person name="Bowie J.H."/>
            <person name="Bilusich D."/>
            <person name="Tyler M.J."/>
        </authorList>
    </citation>
    <scope>PROTEIN SEQUENCE</scope>
    <scope>IDENTIFICATION BY MASS SPECTROMETRY</scope>
    <scope>FUNCTION</scope>
    <scope>SUBCELLULAR LOCATION</scope>
    <scope>TISSUE SPECIFICITY</scope>
    <scope>AMIDATION AT LEU-25</scope>
    <source>
        <tissue evidence="2">Skin secretion</tissue>
    </source>
</reference>
<reference evidence="5" key="2">
    <citation type="journal article" date="2009" name="Toxicon">
        <title>Activities of seasonably variable caerulein and rothein skin peptides from the tree frogs Litoria splendida and Litoria rothii.</title>
        <authorList>
            <person name="Sherman P.J."/>
            <person name="Jackway R.J."/>
            <person name="Nicholson E."/>
            <person name="Musgrave I.F."/>
            <person name="Boontheung P."/>
            <person name="Bowie J.H."/>
        </authorList>
    </citation>
    <scope>FUNCTION</scope>
    <scope>DEVELOPMENTAL STAGE</scope>
</reference>
<sequence length="25" mass="2585">GLLSVLGSVAKHVLPHVVPVIAEHL</sequence>
<comment type="function">
    <text evidence="2 3">Antibacterial peptide with wide spectrum of activity.</text>
</comment>
<comment type="subcellular location">
    <subcellularLocation>
        <location evidence="2">Secreted</location>
    </subcellularLocation>
</comment>
<comment type="tissue specificity">
    <text evidence="2">Expressed by the skin dorsal glands.</text>
</comment>
<comment type="developmental stage">
    <text evidence="3">Expressed during summer.</text>
</comment>
<comment type="similarity">
    <text evidence="1">Belongs to the frog skin active peptide (FSAP) family. Caerin subfamily.</text>
</comment>
<name>CR11_LITRO</name>
<accession>P86501</accession>
<evidence type="ECO:0000255" key="1"/>
<evidence type="ECO:0000269" key="2">
    <source>
    </source>
</evidence>
<evidence type="ECO:0000269" key="3">
    <source>
    </source>
</evidence>
<evidence type="ECO:0000303" key="4">
    <source>
    </source>
</evidence>
<evidence type="ECO:0000305" key="5"/>
<protein>
    <recommendedName>
        <fullName evidence="4">Caerin-1.1</fullName>
    </recommendedName>
</protein>
<feature type="peptide" id="PRO_0000394428" description="Caerin-1.1" evidence="2">
    <location>
        <begin position="1"/>
        <end position="25"/>
    </location>
</feature>
<feature type="modified residue" description="Leucine amide" evidence="2">
    <location>
        <position position="25"/>
    </location>
</feature>
<keyword id="KW-0027">Amidation</keyword>
<keyword id="KW-0878">Amphibian defense peptide</keyword>
<keyword id="KW-0044">Antibiotic</keyword>
<keyword id="KW-0929">Antimicrobial</keyword>
<keyword id="KW-0903">Direct protein sequencing</keyword>
<keyword id="KW-0964">Secreted</keyword>